<organism>
    <name type="scientific">Bacteroides thetaiotaomicron (strain ATCC 29148 / DSM 2079 / JCM 5827 / CCUG 10774 / NCTC 10582 / VPI-5482 / E50)</name>
    <dbReference type="NCBI Taxonomy" id="226186"/>
    <lineage>
        <taxon>Bacteria</taxon>
        <taxon>Pseudomonadati</taxon>
        <taxon>Bacteroidota</taxon>
        <taxon>Bacteroidia</taxon>
        <taxon>Bacteroidales</taxon>
        <taxon>Bacteroidaceae</taxon>
        <taxon>Bacteroides</taxon>
    </lineage>
</organism>
<evidence type="ECO:0000255" key="1">
    <source>
        <dbReference type="HAMAP-Rule" id="MF_00600"/>
    </source>
</evidence>
<keyword id="KW-0067">ATP-binding</keyword>
<keyword id="KW-0143">Chaperone</keyword>
<keyword id="KW-0963">Cytoplasm</keyword>
<keyword id="KW-0413">Isomerase</keyword>
<keyword id="KW-0547">Nucleotide-binding</keyword>
<keyword id="KW-1185">Reference proteome</keyword>
<feature type="chain" id="PRO_0000063280" description="Chaperonin GroEL">
    <location>
        <begin position="1"/>
        <end position="545"/>
    </location>
</feature>
<feature type="binding site" evidence="1">
    <location>
        <begin position="29"/>
        <end position="32"/>
    </location>
    <ligand>
        <name>ATP</name>
        <dbReference type="ChEBI" id="CHEBI:30616"/>
    </ligand>
</feature>
<feature type="binding site" evidence="1">
    <location>
        <position position="50"/>
    </location>
    <ligand>
        <name>ATP</name>
        <dbReference type="ChEBI" id="CHEBI:30616"/>
    </ligand>
</feature>
<feature type="binding site" evidence="1">
    <location>
        <begin position="86"/>
        <end position="90"/>
    </location>
    <ligand>
        <name>ATP</name>
        <dbReference type="ChEBI" id="CHEBI:30616"/>
    </ligand>
</feature>
<feature type="binding site" evidence="1">
    <location>
        <position position="415"/>
    </location>
    <ligand>
        <name>ATP</name>
        <dbReference type="ChEBI" id="CHEBI:30616"/>
    </ligand>
</feature>
<feature type="binding site" evidence="1">
    <location>
        <position position="495"/>
    </location>
    <ligand>
        <name>ATP</name>
        <dbReference type="ChEBI" id="CHEBI:30616"/>
    </ligand>
</feature>
<name>CH60_BACTN</name>
<comment type="function">
    <text evidence="1">Together with its co-chaperonin GroES, plays an essential role in assisting protein folding. The GroEL-GroES system forms a nano-cage that allows encapsulation of the non-native substrate proteins and provides a physical environment optimized to promote and accelerate protein folding.</text>
</comment>
<comment type="catalytic activity">
    <reaction evidence="1">
        <text>ATP + H2O + a folded polypeptide = ADP + phosphate + an unfolded polypeptide.</text>
        <dbReference type="EC" id="5.6.1.7"/>
    </reaction>
</comment>
<comment type="subunit">
    <text evidence="1">Forms a cylinder of 14 subunits composed of two heptameric rings stacked back-to-back. Interacts with the co-chaperonin GroES.</text>
</comment>
<comment type="subcellular location">
    <subcellularLocation>
        <location evidence="1">Cytoplasm</location>
    </subcellularLocation>
</comment>
<comment type="similarity">
    <text evidence="1">Belongs to the chaperonin (HSP60) family.</text>
</comment>
<protein>
    <recommendedName>
        <fullName evidence="1">Chaperonin GroEL</fullName>
        <ecNumber evidence="1">5.6.1.7</ecNumber>
    </recommendedName>
    <alternativeName>
        <fullName evidence="1">60 kDa chaperonin</fullName>
    </alternativeName>
    <alternativeName>
        <fullName evidence="1">Chaperonin-60</fullName>
        <shortName evidence="1">Cpn60</shortName>
    </alternativeName>
</protein>
<gene>
    <name evidence="1" type="primary">groEL</name>
    <name evidence="1" type="synonym">groL</name>
    <name type="ordered locus">BT_1829</name>
</gene>
<accession>Q8A6P8</accession>
<sequence length="545" mass="58203">MAKEILFNIDARDQLKKGVDALANAVKVTLGPKGRNVIIEKKFGAPHITKDGVTVAKEIELADAYQNTGAQLVKEVASKTGDDAGDGTTTATVLAQAIVAEGLKNVTAGASPMDIKRGIDKAVAKVVESIKAQAETVGDNYDKIEQVATVSANNDPVIGKLIADAMRKVSKDGVITIEEAKGTDTTIGVVEGMQFDRGYLSAYFVTNTEKMECEMEKPYILIYDKKISNLKDFLPILEPAVQTGRPLLVIAEDVDSEALTTLVVNRLRSQLKICAVKAPGFGDRRKEMLEDIAILTGGVVISEEKGLKLEQATIEMLGTADKVTVSKDYTTIVNGAGVKENIKERCDQIKAQIVATKSDYDREKLQERLAKLSGGVAVLYVGAASEVEMKEKKDRVDDALRATRAAIEEGIIPGGGVAYIRAIDSLEGMKGDNADETTGIGIIKRAIEEPLREIVANAGKEGAVVVQKVREGKGDFGYNARTDVYENLHAAGVVDPAKVARVALENAASIAGMFLTTECVIVEKKEDKPEMPMGAPGMGGMGGMM</sequence>
<proteinExistence type="inferred from homology"/>
<reference key="1">
    <citation type="journal article" date="2003" name="Science">
        <title>A genomic view of the human-Bacteroides thetaiotaomicron symbiosis.</title>
        <authorList>
            <person name="Xu J."/>
            <person name="Bjursell M.K."/>
            <person name="Himrod J."/>
            <person name="Deng S."/>
            <person name="Carmichael L.K."/>
            <person name="Chiang H.C."/>
            <person name="Hooper L.V."/>
            <person name="Gordon J.I."/>
        </authorList>
    </citation>
    <scope>NUCLEOTIDE SEQUENCE [LARGE SCALE GENOMIC DNA]</scope>
    <source>
        <strain>ATCC 29148 / DSM 2079 / JCM 5827 / CCUG 10774 / NCTC 10582 / VPI-5482 / E50</strain>
    </source>
</reference>
<dbReference type="EC" id="5.6.1.7" evidence="1"/>
<dbReference type="EMBL" id="AE015928">
    <property type="protein sequence ID" value="AAO76936.1"/>
    <property type="molecule type" value="Genomic_DNA"/>
</dbReference>
<dbReference type="RefSeq" id="NP_810742.1">
    <property type="nucleotide sequence ID" value="NC_004663.1"/>
</dbReference>
<dbReference type="RefSeq" id="WP_008763228.1">
    <property type="nucleotide sequence ID" value="NZ_UYXG01000014.1"/>
</dbReference>
<dbReference type="SMR" id="Q8A6P8"/>
<dbReference type="FunCoup" id="Q8A6P8">
    <property type="interactions" value="717"/>
</dbReference>
<dbReference type="STRING" id="226186.BT_1829"/>
<dbReference type="PaxDb" id="226186-BT_1829"/>
<dbReference type="EnsemblBacteria" id="AAO76936">
    <property type="protein sequence ID" value="AAO76936"/>
    <property type="gene ID" value="BT_1829"/>
</dbReference>
<dbReference type="GeneID" id="60927817"/>
<dbReference type="KEGG" id="bth:BT_1829"/>
<dbReference type="PATRIC" id="fig|226186.12.peg.1878"/>
<dbReference type="eggNOG" id="COG0459">
    <property type="taxonomic scope" value="Bacteria"/>
</dbReference>
<dbReference type="HOGENOM" id="CLU_016503_3_0_10"/>
<dbReference type="InParanoid" id="Q8A6P8"/>
<dbReference type="OrthoDB" id="9766614at2"/>
<dbReference type="Proteomes" id="UP000001414">
    <property type="component" value="Chromosome"/>
</dbReference>
<dbReference type="GO" id="GO:1990220">
    <property type="term" value="C:GroEL-GroES complex"/>
    <property type="evidence" value="ECO:0000318"/>
    <property type="project" value="GO_Central"/>
</dbReference>
<dbReference type="GO" id="GO:0005524">
    <property type="term" value="F:ATP binding"/>
    <property type="evidence" value="ECO:0000318"/>
    <property type="project" value="GO_Central"/>
</dbReference>
<dbReference type="GO" id="GO:0140662">
    <property type="term" value="F:ATP-dependent protein folding chaperone"/>
    <property type="evidence" value="ECO:0007669"/>
    <property type="project" value="InterPro"/>
</dbReference>
<dbReference type="GO" id="GO:0016853">
    <property type="term" value="F:isomerase activity"/>
    <property type="evidence" value="ECO:0007669"/>
    <property type="project" value="UniProtKB-KW"/>
</dbReference>
<dbReference type="GO" id="GO:0051082">
    <property type="term" value="F:unfolded protein binding"/>
    <property type="evidence" value="ECO:0000318"/>
    <property type="project" value="GO_Central"/>
</dbReference>
<dbReference type="GO" id="GO:0051085">
    <property type="term" value="P:chaperone cofactor-dependent protein refolding"/>
    <property type="evidence" value="ECO:0000318"/>
    <property type="project" value="GO_Central"/>
</dbReference>
<dbReference type="GO" id="GO:0042026">
    <property type="term" value="P:protein refolding"/>
    <property type="evidence" value="ECO:0007669"/>
    <property type="project" value="UniProtKB-UniRule"/>
</dbReference>
<dbReference type="GO" id="GO:0009408">
    <property type="term" value="P:response to heat"/>
    <property type="evidence" value="ECO:0000318"/>
    <property type="project" value="GO_Central"/>
</dbReference>
<dbReference type="CDD" id="cd03344">
    <property type="entry name" value="GroEL"/>
    <property type="match status" value="1"/>
</dbReference>
<dbReference type="FunFam" id="3.50.7.10:FF:000001">
    <property type="entry name" value="60 kDa chaperonin"/>
    <property type="match status" value="1"/>
</dbReference>
<dbReference type="Gene3D" id="3.50.7.10">
    <property type="entry name" value="GroEL"/>
    <property type="match status" value="1"/>
</dbReference>
<dbReference type="Gene3D" id="1.10.560.10">
    <property type="entry name" value="GroEL-like equatorial domain"/>
    <property type="match status" value="1"/>
</dbReference>
<dbReference type="Gene3D" id="3.30.260.10">
    <property type="entry name" value="TCP-1-like chaperonin intermediate domain"/>
    <property type="match status" value="1"/>
</dbReference>
<dbReference type="HAMAP" id="MF_00600">
    <property type="entry name" value="CH60"/>
    <property type="match status" value="1"/>
</dbReference>
<dbReference type="InterPro" id="IPR018370">
    <property type="entry name" value="Chaperonin_Cpn60_CS"/>
</dbReference>
<dbReference type="InterPro" id="IPR001844">
    <property type="entry name" value="Cpn60/GroEL"/>
</dbReference>
<dbReference type="InterPro" id="IPR002423">
    <property type="entry name" value="Cpn60/GroEL/TCP-1"/>
</dbReference>
<dbReference type="InterPro" id="IPR027409">
    <property type="entry name" value="GroEL-like_apical_dom_sf"/>
</dbReference>
<dbReference type="InterPro" id="IPR027413">
    <property type="entry name" value="GROEL-like_equatorial_sf"/>
</dbReference>
<dbReference type="InterPro" id="IPR027410">
    <property type="entry name" value="TCP-1-like_intermed_sf"/>
</dbReference>
<dbReference type="NCBIfam" id="TIGR02348">
    <property type="entry name" value="GroEL"/>
    <property type="match status" value="1"/>
</dbReference>
<dbReference type="NCBIfam" id="NF000592">
    <property type="entry name" value="PRK00013.1"/>
    <property type="match status" value="1"/>
</dbReference>
<dbReference type="NCBIfam" id="NF009487">
    <property type="entry name" value="PRK12849.1"/>
    <property type="match status" value="1"/>
</dbReference>
<dbReference type="NCBIfam" id="NF009488">
    <property type="entry name" value="PRK12850.1"/>
    <property type="match status" value="1"/>
</dbReference>
<dbReference type="NCBIfam" id="NF009489">
    <property type="entry name" value="PRK12851.1"/>
    <property type="match status" value="1"/>
</dbReference>
<dbReference type="PANTHER" id="PTHR45633">
    <property type="entry name" value="60 KDA HEAT SHOCK PROTEIN, MITOCHONDRIAL"/>
    <property type="match status" value="1"/>
</dbReference>
<dbReference type="Pfam" id="PF00118">
    <property type="entry name" value="Cpn60_TCP1"/>
    <property type="match status" value="1"/>
</dbReference>
<dbReference type="PRINTS" id="PR00298">
    <property type="entry name" value="CHAPERONIN60"/>
</dbReference>
<dbReference type="SUPFAM" id="SSF52029">
    <property type="entry name" value="GroEL apical domain-like"/>
    <property type="match status" value="1"/>
</dbReference>
<dbReference type="SUPFAM" id="SSF48592">
    <property type="entry name" value="GroEL equatorial domain-like"/>
    <property type="match status" value="1"/>
</dbReference>
<dbReference type="SUPFAM" id="SSF54849">
    <property type="entry name" value="GroEL-intermediate domain like"/>
    <property type="match status" value="1"/>
</dbReference>
<dbReference type="PROSITE" id="PS00296">
    <property type="entry name" value="CHAPERONINS_CPN60"/>
    <property type="match status" value="1"/>
</dbReference>